<reference key="1">
    <citation type="journal article" date="2015" name="Appl. Environ. Microbiol.">
        <title>An in planta-expressed polyketide synthase produces (R)-mellein in the wheat pathogen Parastagonospora nodorum.</title>
        <authorList>
            <person name="Chooi Y.H."/>
            <person name="Krill C."/>
            <person name="Barrow R.A."/>
            <person name="Chen S."/>
            <person name="Trengove R."/>
            <person name="Oliver R.P."/>
            <person name="Solomon P.S."/>
        </authorList>
    </citation>
    <scope>NUCLEOTIDE SEQUENCE [GENOMIC DNA]</scope>
    <scope>INDUCTION</scope>
    <scope>DISRUPTION PHENOTYPE</scope>
    <scope>CATALYTIC ACTIVITY</scope>
    <scope>FUNCTION</scope>
    <scope>DOMAIN</scope>
    <source>
        <strain>SN15 / ATCC MYA-4574 / FGSC 10173</strain>
    </source>
</reference>
<reference key="2">
    <citation type="journal article" date="2007" name="Plant Cell">
        <title>Dothideomycete-plant interactions illuminated by genome sequencing and EST analysis of the wheat pathogen Stagonospora nodorum.</title>
        <authorList>
            <person name="Hane J.K."/>
            <person name="Lowe R.G.T."/>
            <person name="Solomon P.S."/>
            <person name="Tan K.-C."/>
            <person name="Schoch C.L."/>
            <person name="Spatafora J.W."/>
            <person name="Crous P.W."/>
            <person name="Kodira C.D."/>
            <person name="Birren B.W."/>
            <person name="Galagan J.E."/>
            <person name="Torriani S.F.F."/>
            <person name="McDonald B.A."/>
            <person name="Oliver R.P."/>
        </authorList>
    </citation>
    <scope>NUCLEOTIDE SEQUENCE [LARGE SCALE GENOMIC DNA]</scope>
    <source>
        <strain>SN15 / ATCC MYA-4574 / FGSC 10173</strain>
    </source>
</reference>
<proteinExistence type="evidence at protein level"/>
<evidence type="ECO:0000255" key="1"/>
<evidence type="ECO:0000255" key="2">
    <source>
        <dbReference type="PROSITE-ProRule" id="PRU00258"/>
    </source>
</evidence>
<evidence type="ECO:0000255" key="3">
    <source>
        <dbReference type="PROSITE-ProRule" id="PRU01348"/>
    </source>
</evidence>
<evidence type="ECO:0000255" key="4">
    <source>
        <dbReference type="PROSITE-ProRule" id="PRU01363"/>
    </source>
</evidence>
<evidence type="ECO:0000255" key="5">
    <source>
        <dbReference type="PROSITE-ProRule" id="PRU10022"/>
    </source>
</evidence>
<evidence type="ECO:0000256" key="6">
    <source>
        <dbReference type="SAM" id="MobiDB-lite"/>
    </source>
</evidence>
<evidence type="ECO:0000269" key="7">
    <source>
    </source>
</evidence>
<evidence type="ECO:0000303" key="8">
    <source>
    </source>
</evidence>
<evidence type="ECO:0000305" key="9"/>
<evidence type="ECO:0000305" key="10">
    <source>
    </source>
</evidence>
<feature type="chain" id="PRO_0000447725" description="Mellein synthase">
    <location>
        <begin position="1"/>
        <end position="1785"/>
    </location>
</feature>
<feature type="domain" description="Ketosynthase family 3 (KS3)" evidence="3 10">
    <location>
        <begin position="39"/>
        <end position="464"/>
    </location>
</feature>
<feature type="domain" description="PKS/mFAS DH" evidence="4">
    <location>
        <begin position="933"/>
        <end position="1206"/>
    </location>
</feature>
<feature type="domain" description="Carrier" evidence="2 10">
    <location>
        <begin position="1706"/>
        <end position="1781"/>
    </location>
</feature>
<feature type="region of interest" description="Disordered" evidence="6">
    <location>
        <begin position="1"/>
        <end position="36"/>
    </location>
</feature>
<feature type="region of interest" description="Malonyl-CoA:ACP transacylase (MAT) domain" evidence="1 10">
    <location>
        <begin position="575"/>
        <end position="888"/>
    </location>
</feature>
<feature type="region of interest" description="N-terminal hotdog fold" evidence="4">
    <location>
        <begin position="933"/>
        <end position="1047"/>
    </location>
</feature>
<feature type="region of interest" description="Dehydratase (DH) domain" evidence="1 10">
    <location>
        <begin position="935"/>
        <end position="1203"/>
    </location>
</feature>
<feature type="region of interest" description="C-terminal hotdog fold" evidence="4">
    <location>
        <begin position="1062"/>
        <end position="1206"/>
    </location>
</feature>
<feature type="region of interest" description="Ketoreductase (KR) domain" evidence="1 10">
    <location>
        <begin position="1418"/>
        <end position="1608"/>
    </location>
</feature>
<feature type="region of interest" description="Disordered" evidence="6">
    <location>
        <begin position="1681"/>
        <end position="1701"/>
    </location>
</feature>
<feature type="compositionally biased region" description="Low complexity" evidence="6">
    <location>
        <begin position="8"/>
        <end position="27"/>
    </location>
</feature>
<feature type="compositionally biased region" description="Polar residues" evidence="6">
    <location>
        <begin position="1681"/>
        <end position="1698"/>
    </location>
</feature>
<feature type="active site" description="For beta-ketoacyl synthase activity" evidence="3">
    <location>
        <position position="211"/>
    </location>
</feature>
<feature type="active site" description="For beta-ketoacyl synthase activity" evidence="3">
    <location>
        <position position="346"/>
    </location>
</feature>
<feature type="active site" description="For beta-ketoacyl synthase activity" evidence="3">
    <location>
        <position position="386"/>
    </location>
</feature>
<feature type="active site" description="For malonyltransferase activity" evidence="5">
    <location>
        <position position="661"/>
    </location>
</feature>
<feature type="active site" description="Proton acceptor; for dehydratase activity" evidence="4">
    <location>
        <position position="965"/>
    </location>
</feature>
<feature type="active site" description="Proton donor; for dehydratase activity" evidence="4">
    <location>
        <position position="1123"/>
    </location>
</feature>
<feature type="modified residue" description="O-(pantetheine 4'-phosphoryl)serine" evidence="2">
    <location>
        <position position="1741"/>
    </location>
</feature>
<organism>
    <name type="scientific">Phaeosphaeria nodorum (strain SN15 / ATCC MYA-4574 / FGSC 10173)</name>
    <name type="common">Glume blotch fungus</name>
    <name type="synonym">Parastagonospora nodorum</name>
    <dbReference type="NCBI Taxonomy" id="321614"/>
    <lineage>
        <taxon>Eukaryota</taxon>
        <taxon>Fungi</taxon>
        <taxon>Dikarya</taxon>
        <taxon>Ascomycota</taxon>
        <taxon>Pezizomycotina</taxon>
        <taxon>Dothideomycetes</taxon>
        <taxon>Pleosporomycetidae</taxon>
        <taxon>Pleosporales</taxon>
        <taxon>Pleosporineae</taxon>
        <taxon>Phaeosphaeriaceae</taxon>
        <taxon>Parastagonospora</taxon>
    </lineage>
</organism>
<accession>A0A0A0RM07</accession>
<accession>Q0V687</accession>
<comment type="function">
    <text evidence="7">Polyketide synthase that produces (R)-mellein, a secondary metabolite that inhibits the germination of wheat (Triticum aestivum) and barrel medic (Medicago truncatula) seeds (PubMed:25326302). Condensates 1 acetate starter unit and 4 extender malonate units (PubMed:25326302). The nascent pentaketide intermediate then undergoes an aldol cyclization and is aromatized via dehydration (PubMed:25326302). The (R)-O-methylmellein isolated from P.nodorum is most likely to be derived from (R)-mellein via an additional methylation at the hydroxyl group. Interestingly, no O-methyltransferase gene is encoded in the vicinity of MLNS on the chromosome. Thus, the O-methylation is likely to be catalyzed by an endogenous O-methyltransferase encoded elsewhere in the genome of P.nodorum (PubMed:25326302).</text>
</comment>
<comment type="pathway">
    <text evidence="7">Secondary metabolite biosynthesis.</text>
</comment>
<comment type="induction">
    <text evidence="7">Expression is highly induced during plant infection.</text>
</comment>
<comment type="domain">
    <text evidence="10">Multidomain protein; including a ketosynthase (KS) that catalyzes repeated decarboxylative condensation to elongate the polyketide backbone; a malonyl-CoA:ACP transacylase (MAT) that selects and transfers the extender unit malonyl-CoA; a dehydrogenase (DH) domain that reduces hydroxyl groups to enoyl groups, a beta-ketoreductase domain (KR) that reduces beta-ketone groups to hydroxyl groups; and an acyl-carrier protein (ACP) that serves as the tether of the growing and completed polyketide via its phosphopantetheinyl arm.</text>
</comment>
<comment type="disruption phenotype">
    <text evidence="7">Does not induce any observable growth defect but impairs the production of both mellein and O-methylmellein.</text>
</comment>
<comment type="sequence caution" evidence="9">
    <conflict type="erroneous initiation">
        <sequence resource="EMBL-CDS" id="EAT91972"/>
    </conflict>
    <text>Truncated N-terminus.</text>
</comment>
<dbReference type="EC" id="2.3.1.-" evidence="7"/>
<dbReference type="EMBL" id="KM365454">
    <property type="protein sequence ID" value="AIW00670.1"/>
    <property type="molecule type" value="Genomic_DNA"/>
</dbReference>
<dbReference type="EMBL" id="CH445325">
    <property type="protein sequence ID" value="EAT91972.1"/>
    <property type="status" value="ALT_INIT"/>
    <property type="molecule type" value="Genomic_DNA"/>
</dbReference>
<dbReference type="RefSeq" id="XP_001791162.1">
    <property type="nucleotide sequence ID" value="XM_001791110.1"/>
</dbReference>
<dbReference type="SMR" id="A0A0A0RM07"/>
<dbReference type="STRING" id="321614.A0A0A0RM07"/>
<dbReference type="GeneID" id="5967957"/>
<dbReference type="KEGG" id="pno:SNOG_00477"/>
<dbReference type="VEuPathDB" id="FungiDB:JI435_004770"/>
<dbReference type="eggNOG" id="KOG1202">
    <property type="taxonomic scope" value="Eukaryota"/>
</dbReference>
<dbReference type="HOGENOM" id="CLU_000022_35_3_1"/>
<dbReference type="InParanoid" id="A0A0A0RM07"/>
<dbReference type="OrthoDB" id="5334845at2759"/>
<dbReference type="PHI-base" id="PHI:3324"/>
<dbReference type="Proteomes" id="UP000001055">
    <property type="component" value="Unassembled WGS sequence"/>
</dbReference>
<dbReference type="GO" id="GO:0004315">
    <property type="term" value="F:3-oxoacyl-[acyl-carrier-protein] synthase activity"/>
    <property type="evidence" value="ECO:0007669"/>
    <property type="project" value="InterPro"/>
</dbReference>
<dbReference type="GO" id="GO:0004312">
    <property type="term" value="F:fatty acid synthase activity"/>
    <property type="evidence" value="ECO:0000318"/>
    <property type="project" value="GO_Central"/>
</dbReference>
<dbReference type="GO" id="GO:0016491">
    <property type="term" value="F:oxidoreductase activity"/>
    <property type="evidence" value="ECO:0007669"/>
    <property type="project" value="UniProtKB-KW"/>
</dbReference>
<dbReference type="GO" id="GO:0031177">
    <property type="term" value="F:phosphopantetheine binding"/>
    <property type="evidence" value="ECO:0007669"/>
    <property type="project" value="InterPro"/>
</dbReference>
<dbReference type="GO" id="GO:0006633">
    <property type="term" value="P:fatty acid biosynthetic process"/>
    <property type="evidence" value="ECO:0000318"/>
    <property type="project" value="GO_Central"/>
</dbReference>
<dbReference type="GO" id="GO:0044550">
    <property type="term" value="P:secondary metabolite biosynthetic process"/>
    <property type="evidence" value="ECO:0000318"/>
    <property type="project" value="GO_Central"/>
</dbReference>
<dbReference type="CDD" id="cd05274">
    <property type="entry name" value="KR_FAS_SDR_x"/>
    <property type="match status" value="1"/>
</dbReference>
<dbReference type="CDD" id="cd00833">
    <property type="entry name" value="PKS"/>
    <property type="match status" value="1"/>
</dbReference>
<dbReference type="Gene3D" id="3.30.70.3290">
    <property type="match status" value="1"/>
</dbReference>
<dbReference type="Gene3D" id="3.40.47.10">
    <property type="match status" value="1"/>
</dbReference>
<dbReference type="Gene3D" id="1.10.1200.10">
    <property type="entry name" value="ACP-like"/>
    <property type="match status" value="1"/>
</dbReference>
<dbReference type="Gene3D" id="3.40.366.10">
    <property type="entry name" value="Malonyl-Coenzyme A Acyl Carrier Protein, domain 2"/>
    <property type="match status" value="1"/>
</dbReference>
<dbReference type="Gene3D" id="3.40.50.720">
    <property type="entry name" value="NAD(P)-binding Rossmann-like Domain"/>
    <property type="match status" value="1"/>
</dbReference>
<dbReference type="Gene3D" id="3.10.129.110">
    <property type="entry name" value="Polyketide synthase dehydratase"/>
    <property type="match status" value="1"/>
</dbReference>
<dbReference type="InterPro" id="IPR001227">
    <property type="entry name" value="Ac_transferase_dom_sf"/>
</dbReference>
<dbReference type="InterPro" id="IPR036736">
    <property type="entry name" value="ACP-like_sf"/>
</dbReference>
<dbReference type="InterPro" id="IPR014043">
    <property type="entry name" value="Acyl_transferase_dom"/>
</dbReference>
<dbReference type="InterPro" id="IPR016035">
    <property type="entry name" value="Acyl_Trfase/lysoPLipase"/>
</dbReference>
<dbReference type="InterPro" id="IPR018201">
    <property type="entry name" value="Ketoacyl_synth_AS"/>
</dbReference>
<dbReference type="InterPro" id="IPR014031">
    <property type="entry name" value="Ketoacyl_synth_C"/>
</dbReference>
<dbReference type="InterPro" id="IPR014030">
    <property type="entry name" value="Ketoacyl_synth_N"/>
</dbReference>
<dbReference type="InterPro" id="IPR016036">
    <property type="entry name" value="Malonyl_transacylase_ACP-bd"/>
</dbReference>
<dbReference type="InterPro" id="IPR036291">
    <property type="entry name" value="NAD(P)-bd_dom_sf"/>
</dbReference>
<dbReference type="InterPro" id="IPR032821">
    <property type="entry name" value="PKS_assoc"/>
</dbReference>
<dbReference type="InterPro" id="IPR020841">
    <property type="entry name" value="PKS_Beta-ketoAc_synthase_dom"/>
</dbReference>
<dbReference type="InterPro" id="IPR042104">
    <property type="entry name" value="PKS_dehydratase_sf"/>
</dbReference>
<dbReference type="InterPro" id="IPR013968">
    <property type="entry name" value="PKS_KR"/>
</dbReference>
<dbReference type="InterPro" id="IPR049900">
    <property type="entry name" value="PKS_mFAS_DH"/>
</dbReference>
<dbReference type="InterPro" id="IPR050091">
    <property type="entry name" value="PKS_NRPS_Biosynth_Enz"/>
</dbReference>
<dbReference type="InterPro" id="IPR020806">
    <property type="entry name" value="PKS_PP-bd"/>
</dbReference>
<dbReference type="InterPro" id="IPR009081">
    <property type="entry name" value="PP-bd_ACP"/>
</dbReference>
<dbReference type="InterPro" id="IPR006162">
    <property type="entry name" value="Ppantetheine_attach_site"/>
</dbReference>
<dbReference type="InterPro" id="IPR016039">
    <property type="entry name" value="Thiolase-like"/>
</dbReference>
<dbReference type="PANTHER" id="PTHR43775">
    <property type="entry name" value="FATTY ACID SYNTHASE"/>
    <property type="match status" value="1"/>
</dbReference>
<dbReference type="PANTHER" id="PTHR43775:SF22">
    <property type="entry name" value="SYNTHASE, PUTATIVE (JCVI)-RELATED"/>
    <property type="match status" value="1"/>
</dbReference>
<dbReference type="Pfam" id="PF00698">
    <property type="entry name" value="Acyl_transf_1"/>
    <property type="match status" value="1"/>
</dbReference>
<dbReference type="Pfam" id="PF16197">
    <property type="entry name" value="KAsynt_C_assoc"/>
    <property type="match status" value="1"/>
</dbReference>
<dbReference type="Pfam" id="PF00109">
    <property type="entry name" value="ketoacyl-synt"/>
    <property type="match status" value="1"/>
</dbReference>
<dbReference type="Pfam" id="PF02801">
    <property type="entry name" value="Ketoacyl-synt_C"/>
    <property type="match status" value="1"/>
</dbReference>
<dbReference type="Pfam" id="PF08659">
    <property type="entry name" value="KR"/>
    <property type="match status" value="1"/>
</dbReference>
<dbReference type="Pfam" id="PF00550">
    <property type="entry name" value="PP-binding"/>
    <property type="match status" value="1"/>
</dbReference>
<dbReference type="SMART" id="SM00827">
    <property type="entry name" value="PKS_AT"/>
    <property type="match status" value="1"/>
</dbReference>
<dbReference type="SMART" id="SM00822">
    <property type="entry name" value="PKS_KR"/>
    <property type="match status" value="1"/>
</dbReference>
<dbReference type="SMART" id="SM00825">
    <property type="entry name" value="PKS_KS"/>
    <property type="match status" value="1"/>
</dbReference>
<dbReference type="SMART" id="SM00823">
    <property type="entry name" value="PKS_PP"/>
    <property type="match status" value="1"/>
</dbReference>
<dbReference type="SUPFAM" id="SSF47336">
    <property type="entry name" value="ACP-like"/>
    <property type="match status" value="1"/>
</dbReference>
<dbReference type="SUPFAM" id="SSF52151">
    <property type="entry name" value="FabD/lysophospholipase-like"/>
    <property type="match status" value="1"/>
</dbReference>
<dbReference type="SUPFAM" id="SSF51735">
    <property type="entry name" value="NAD(P)-binding Rossmann-fold domains"/>
    <property type="match status" value="2"/>
</dbReference>
<dbReference type="SUPFAM" id="SSF55048">
    <property type="entry name" value="Probable ACP-binding domain of malonyl-CoA ACP transacylase"/>
    <property type="match status" value="1"/>
</dbReference>
<dbReference type="SUPFAM" id="SSF53901">
    <property type="entry name" value="Thiolase-like"/>
    <property type="match status" value="1"/>
</dbReference>
<dbReference type="PROSITE" id="PS50075">
    <property type="entry name" value="CARRIER"/>
    <property type="match status" value="1"/>
</dbReference>
<dbReference type="PROSITE" id="PS00606">
    <property type="entry name" value="KS3_1"/>
    <property type="match status" value="1"/>
</dbReference>
<dbReference type="PROSITE" id="PS52004">
    <property type="entry name" value="KS3_2"/>
    <property type="match status" value="1"/>
</dbReference>
<dbReference type="PROSITE" id="PS00012">
    <property type="entry name" value="PHOSPHOPANTETHEINE"/>
    <property type="match status" value="1"/>
</dbReference>
<dbReference type="PROSITE" id="PS52019">
    <property type="entry name" value="PKS_MFAS_DH"/>
    <property type="match status" value="1"/>
</dbReference>
<sequence>MATPDDPATPALSLSASNSSSPTAASSVPPPTGTSEIQYDDVAIIGMSCRTAGGNDSPEKLWRFIMDKKDASGESPSWRWEPWVRRDTRNAKVIEKTISKGYFIEDLENFDASFFGISPKEAEQMDPHQRLGLEVTWEALEDAGINPQSLSGSDTAVYVGVDSDDYSRLLLEDIPNIEAWMGIGTTAHGIPNRISYHLDLMGPSAAVDAACASSMVAVHTGRQAILAGESRIAIVGGVNVCLSPALFHMLGAAGALSPDGVCLSFDEEARGYARGEGAAILILKKMSHAIMDGDHILATIKGSAIAQDGKTNGIMAPNAKAQELVARKALKQAGINALTVGYIEAHATSTPLGDPTEVSAISAVYGVGRPTDTPALIGSIKPNVGHLEAAAGAISLVKAVMAVQKGIVPPQTRLNKLNTRVDWAKSGLHVVRESTQWGTEDSPRRAAICSYGYGGTVSHAIIEQFAHAADPFTASTSDDNHPTLLLLSAPQGKQRLPAQSAALAEWISPAGAHESLRSIAATLATRRAHHENRAAFIVSSHTEAAETLNLFSKGAEHDSIVQSRTLDNNINKQIVWVFSGHGSHWSGMGKQLLQNAVFYRTVAPLDIVVVQELGYSAIEALKTGRFESSGQVQVLTYMTQIGLIQLLKAKGVHPHAVIGHSVGEIAASVAAGCLTPEEGMIIVTRRARLFAKVIGCGGMFLVSLPFAEVLAELGGRTDIVAAIDSSPSSCVISGLNAPLEEYVEKLKNRGIRVFQVKTDIAFHSPMLEVLSKPLKESLEGSLNPQPPNIKLYSTSQADTRHPARRDAEYWVDNMVKPVWLRPAVTAAIEDHYRIFMEVSTHPIVSHSLDETLAENGASDFTTIHTMKKEQSAEKCILHAVAQLWTKGVKIDFKFLGRQWSREVPKIRWSHKRFWKEVSTGSASAQTVHDPDKNNMLGQRMVVAGTNMTIFTTALDESSKPFPMPHQLHGTDIIPVSVYVNTFIKATGGKVLSKMELRVPLAVTNDVRNVQVIVDGQSVKVASRLSSSDDMSWVTHSTASWENEPSANVLPSLDVSSVIKRIGTRVSETFSVDYLKKTGVSGMAFPWAVNDHYNNTKEMLVTLDNDPEHETMSWDPCSWGATLDAATSVGATLFSREVKLRIVSHIDRLTIYSSDPPPKRYHLYVTEASSSQVHACSADISVLDLSGTLLARIESIRFTEVEATPTKSTSIESGVHQIAWVPARLSEKPLSLEQIVLVSEDDAKLEQYANELQRQAPKIVKLTSAAKLRDNGALFMREKNATVIYCPGTVTSLEDVASASHRFIWEVATAIKFLVENSISAKFFVILDRTFLAGSPTALAQGALYGLARVVASEHSDIWGGLIDNEGPLFPVMPLKYVQDQDITRYIDGVPRVARMRPFTKQQRYAPSTARTLLPKPEGTYVLTGGLGALGLETCDFLIEKGARRIVVISRRDIPARSQWSKASENLAPILERVKAMEKTGASIYFVSLDIGAADAHQQLLFALERLSLPPVLGVIHASGVLEDSLLVDTTSDSFARVLSPKISGALALHKAFPPGTLDFFVLYSSIGQLVGTSGQSSYAAGNSFLDVLAAHRRSQGDNAIAFQWTAWRGLGMATSTDFLTLELQSKGITDVGRDEAFQAWEHMSKYDVDQAVVTRTLALEADDILPCALLEEVVVRKARAQDQSAPASGNASDSSGRPTASADLKPWLDVKIRECVALVMGVEDIEEIDTRVPLSDYGVDSIMTIALRQKLQSKLKIKVPQTLMWNYPTVSAMVGWFQKQFEEGQ</sequence>
<protein>
    <recommendedName>
        <fullName evidence="8">Mellein synthase</fullName>
        <ecNumber evidence="7">2.3.1.-</ecNumber>
    </recommendedName>
    <alternativeName>
        <fullName evidence="9">Polyketide synthase MLNS</fullName>
        <shortName evidence="9">PKS MLNS</shortName>
    </alternativeName>
</protein>
<keyword id="KW-0012">Acyltransferase</keyword>
<keyword id="KW-0511">Multifunctional enzyme</keyword>
<keyword id="KW-0521">NADP</keyword>
<keyword id="KW-0560">Oxidoreductase</keyword>
<keyword id="KW-0596">Phosphopantetheine</keyword>
<keyword id="KW-0597">Phosphoprotein</keyword>
<keyword id="KW-0808">Transferase</keyword>
<name>MLNS_PHANO</name>
<gene>
    <name evidence="8" type="primary">MLNS</name>
    <name evidence="8" type="synonym">SN477</name>
    <name type="ORF">SNOG_00477</name>
</gene>